<proteinExistence type="evidence at transcript level"/>
<organism>
    <name type="scientific">Streptomyces sp. (strain CB03234)</name>
    <dbReference type="NCBI Taxonomy" id="1703937"/>
    <lineage>
        <taxon>Bacteria</taxon>
        <taxon>Bacillati</taxon>
        <taxon>Actinomycetota</taxon>
        <taxon>Actinomycetes</taxon>
        <taxon>Kitasatosporales</taxon>
        <taxon>Streptomycetaceae</taxon>
        <taxon>Streptomyces</taxon>
    </lineage>
</organism>
<gene>
    <name evidence="2" type="primary">gvpG</name>
    <name evidence="5" type="ORF">AMK26_13465</name>
</gene>
<evidence type="ECO:0000269" key="1">
    <source>
    </source>
</evidence>
<evidence type="ECO:0000303" key="2">
    <source>
    </source>
</evidence>
<evidence type="ECO:0000305" key="3"/>
<evidence type="ECO:0000305" key="4">
    <source>
    </source>
</evidence>
<evidence type="ECO:0000312" key="5">
    <source>
        <dbReference type="EMBL" id="OKK04376.1"/>
    </source>
</evidence>
<name>GVPG_STRX0</name>
<comment type="function">
    <text evidence="3">Might be a minor component of the gas vesicle involved in nucleating their formation. Gas vesicles are hollow, gas filled proteinaceous nanostructures found in some microorganisms. It is not clear what function gas vesicles perform in soil bacteria.</text>
</comment>
<comment type="subcellular location">
    <subcellularLocation>
        <location evidence="4">Gas vesicle</location>
    </subcellularLocation>
</comment>
<comment type="induction">
    <text evidence="1">Gas vesicle production is induced by growth conditions that promote production of secondary metabolites tiancimycin A and B.</text>
</comment>
<comment type="miscellaneous">
    <text evidence="1">This strain probably produces some gas vesicles from the probable gvpO-gvpA-gvpF-gvpG-gvpJ-gvpL-gvpS-gvpK operon; it can be induced to produce more under certain growth conditions.</text>
</comment>
<comment type="similarity">
    <text evidence="3">Belongs to the gas vesicle GvpG family.</text>
</comment>
<protein>
    <recommendedName>
        <fullName evidence="2">Gas vesicle protein G</fullName>
    </recommendedName>
</protein>
<keyword id="KW-0304">Gas vesicle</keyword>
<keyword id="KW-1185">Reference proteome</keyword>
<reference evidence="5" key="1">
    <citation type="journal article" date="2016" name="MBio">
        <title>Strain Prioritization and Genome Mining for Enediyne Natural Products.</title>
        <authorList>
            <person name="Yan X."/>
            <person name="Ge H."/>
            <person name="Huang T."/>
            <person name="Hindra X."/>
            <person name="Yang D."/>
            <person name="Teng Q."/>
            <person name="Crnovcic I."/>
            <person name="Li X."/>
            <person name="Rudolf J.D."/>
            <person name="Lohman J.R."/>
            <person name="Gansemans Y."/>
            <person name="Zhu X."/>
            <person name="Huang Y."/>
            <person name="Zhao L.X."/>
            <person name="Jiang Y."/>
            <person name="Van Nieuwerburgh F."/>
            <person name="Rader C."/>
            <person name="Duan Y."/>
            <person name="Shen B."/>
        </authorList>
    </citation>
    <scope>NUCLEOTIDE SEQUENCE [LARGE SCALE GENOMIC DNA]</scope>
    <source>
        <strain>CB03234</strain>
    </source>
</reference>
<reference key="2">
    <citation type="journal article" date="2019" name="Appl. Microbiol. Biotechnol.">
        <title>Discovery of gas vesicles in Streptomyces sp. CB03234-S and potential effects of gas vesicle gene overexpression on morphological and metabolic changes in streptomycetes.</title>
        <authorList>
            <person name="Huang R."/>
            <person name="Lin J."/>
            <person name="Gao D."/>
            <person name="Zhang F."/>
            <person name="Yi L."/>
            <person name="Huang Y."/>
            <person name="Yan X."/>
            <person name="Duan Y."/>
            <person name="Zhu X."/>
        </authorList>
    </citation>
    <scope>INDUCTION</scope>
    <scope>PROBABLE GAS VESICLE FORMATION</scope>
    <source>
        <strain>CB03234</strain>
    </source>
</reference>
<accession>A0A1Q5LQZ4</accession>
<feature type="chain" id="PRO_0000458446" description="Gas vesicle protein G">
    <location>
        <begin position="1"/>
        <end position="78"/>
    </location>
</feature>
<dbReference type="EMBL" id="LIYH01000003">
    <property type="protein sequence ID" value="OKK04376.1"/>
    <property type="molecule type" value="Genomic_DNA"/>
</dbReference>
<dbReference type="RefSeq" id="WP_073754889.1">
    <property type="nucleotide sequence ID" value="NZ_LIYH01000003.1"/>
</dbReference>
<dbReference type="SMR" id="A0A1Q5LQZ4"/>
<dbReference type="STRING" id="1703937.AMK26_13465"/>
<dbReference type="Proteomes" id="UP000186270">
    <property type="component" value="Unassembled WGS sequence"/>
</dbReference>
<dbReference type="GO" id="GO:0031411">
    <property type="term" value="C:gas vesicle"/>
    <property type="evidence" value="ECO:0007669"/>
    <property type="project" value="UniProtKB-SubCell"/>
</dbReference>
<dbReference type="InterPro" id="IPR007804">
    <property type="entry name" value="GvpG"/>
</dbReference>
<dbReference type="Pfam" id="PF05120">
    <property type="entry name" value="GvpG"/>
    <property type="match status" value="1"/>
</dbReference>
<sequence length="78" mass="8932">MGLLGELLLLPAAPLRGTAWVLRQVVAEAERQYYDPAAVQRELARLNELLEAGEIDEEEFDRREDELLDRLEKGPRQS</sequence>